<protein>
    <recommendedName>
        <fullName evidence="1">Membrane protein insertase YidC</fullName>
    </recommendedName>
    <alternativeName>
        <fullName evidence="1">Foldase YidC</fullName>
    </alternativeName>
    <alternativeName>
        <fullName evidence="1">Membrane integrase YidC</fullName>
    </alternativeName>
    <alternativeName>
        <fullName evidence="1">Membrane protein YidC</fullName>
    </alternativeName>
</protein>
<reference key="1">
    <citation type="journal article" date="2002" name="Proc. Natl. Acad. Sci. U.S.A.">
        <title>Extensive mosaic structure revealed by the complete genome sequence of uropathogenic Escherichia coli.</title>
        <authorList>
            <person name="Welch R.A."/>
            <person name="Burland V."/>
            <person name="Plunkett G. III"/>
            <person name="Redford P."/>
            <person name="Roesch P."/>
            <person name="Rasko D."/>
            <person name="Buckles E.L."/>
            <person name="Liou S.-R."/>
            <person name="Boutin A."/>
            <person name="Hackett J."/>
            <person name="Stroud D."/>
            <person name="Mayhew G.F."/>
            <person name="Rose D.J."/>
            <person name="Zhou S."/>
            <person name="Schwartz D.C."/>
            <person name="Perna N.T."/>
            <person name="Mobley H.L.T."/>
            <person name="Donnenberg M.S."/>
            <person name="Blattner F.R."/>
        </authorList>
    </citation>
    <scope>NUCLEOTIDE SEQUENCE [LARGE SCALE GENOMIC DNA]</scope>
    <source>
        <strain>CFT073 / ATCC 700928 / UPEC</strain>
    </source>
</reference>
<proteinExistence type="inferred from homology"/>
<feature type="chain" id="PRO_0000124713" description="Membrane protein insertase YidC">
    <location>
        <begin position="1"/>
        <end position="548"/>
    </location>
</feature>
<feature type="transmembrane region" description="Helical" evidence="1">
    <location>
        <begin position="6"/>
        <end position="26"/>
    </location>
</feature>
<feature type="transmembrane region" description="Helical" evidence="1">
    <location>
        <begin position="350"/>
        <end position="370"/>
    </location>
</feature>
<feature type="transmembrane region" description="Helical" evidence="1">
    <location>
        <begin position="420"/>
        <end position="440"/>
    </location>
</feature>
<feature type="transmembrane region" description="Helical" evidence="1">
    <location>
        <begin position="458"/>
        <end position="478"/>
    </location>
</feature>
<feature type="transmembrane region" description="Helical" evidence="1">
    <location>
        <begin position="499"/>
        <end position="519"/>
    </location>
</feature>
<feature type="region of interest" description="Disordered" evidence="2">
    <location>
        <begin position="28"/>
        <end position="55"/>
    </location>
</feature>
<feature type="compositionally biased region" description="Low complexity" evidence="2">
    <location>
        <begin position="30"/>
        <end position="50"/>
    </location>
</feature>
<name>YIDC_ECOL6</name>
<sequence length="548" mass="61540">MDSQRNLLVIALLFVSFMIWQAWEQDKNPQPQAQQTTQTTTTAAGSAADQGVPASGQGKLISVKTDVLDLTINTRGGDVEQALLPAYPKELNSTQPFQLLETSPQFIYQAQSGLTGRDGPDNPANGPRPLYNVEKDAYVLAEGQNELQVPMTYTDAAGNTFTKTFVLKRGDYAVNVNYNVQNAGEKPLEISTFGQLKQSITLPPHLDTGSSNFALHTFRGAAYSTPDEKYEKYKFDTIADNENLNISSKGGWVAMLQQYFATAWIPHNDGTNNFYTANLGNGIAAIGYKSQPVLVQPGQTGAMNSTLWVGPEIQDKMAAVAPHLDLTVDYGWLWFISQPLFKLLKWIHSFVGNWGFSIIIITFIVRGIMYPLTKAQYTSMAKMRMLQPKIQAMRERLGDDKQRISQEMMALYKAEKVNPLGGCFPLLIQMPIFLALYYMLMGSVELRQAPFALWIHDLSAQDPYYILPILMGVTMFFIQKMSPTTVTDPMQQKIMTFMPVIFTVFFLWFPSGLVLYYIVSNLVTIIQQQLIYRGLEKRGLHSREKKKS</sequence>
<dbReference type="EMBL" id="AE014075">
    <property type="protein sequence ID" value="AAN83060.1"/>
    <property type="molecule type" value="Genomic_DNA"/>
</dbReference>
<dbReference type="RefSeq" id="WP_000378258.1">
    <property type="nucleotide sequence ID" value="NZ_CP051263.1"/>
</dbReference>
<dbReference type="SMR" id="P65624"/>
<dbReference type="STRING" id="199310.c4629"/>
<dbReference type="GeneID" id="93778448"/>
<dbReference type="KEGG" id="ecc:c4629"/>
<dbReference type="eggNOG" id="COG0706">
    <property type="taxonomic scope" value="Bacteria"/>
</dbReference>
<dbReference type="HOGENOM" id="CLU_016535_3_0_6"/>
<dbReference type="BioCyc" id="ECOL199310:C4629-MONOMER"/>
<dbReference type="Proteomes" id="UP000001410">
    <property type="component" value="Chromosome"/>
</dbReference>
<dbReference type="GO" id="GO:0005886">
    <property type="term" value="C:plasma membrane"/>
    <property type="evidence" value="ECO:0007669"/>
    <property type="project" value="UniProtKB-SubCell"/>
</dbReference>
<dbReference type="GO" id="GO:0032977">
    <property type="term" value="F:membrane insertase activity"/>
    <property type="evidence" value="ECO:0007669"/>
    <property type="project" value="InterPro"/>
</dbReference>
<dbReference type="GO" id="GO:0051205">
    <property type="term" value="P:protein insertion into membrane"/>
    <property type="evidence" value="ECO:0007669"/>
    <property type="project" value="TreeGrafter"/>
</dbReference>
<dbReference type="GO" id="GO:0015031">
    <property type="term" value="P:protein transport"/>
    <property type="evidence" value="ECO:0007669"/>
    <property type="project" value="UniProtKB-KW"/>
</dbReference>
<dbReference type="CDD" id="cd20070">
    <property type="entry name" value="5TM_YidC_Alb3"/>
    <property type="match status" value="1"/>
</dbReference>
<dbReference type="CDD" id="cd19961">
    <property type="entry name" value="EcYidC-like_peri"/>
    <property type="match status" value="1"/>
</dbReference>
<dbReference type="FunFam" id="2.70.98.90:FF:000001">
    <property type="entry name" value="Membrane protein insertase YidC"/>
    <property type="match status" value="1"/>
</dbReference>
<dbReference type="Gene3D" id="2.70.98.90">
    <property type="match status" value="1"/>
</dbReference>
<dbReference type="HAMAP" id="MF_01810">
    <property type="entry name" value="YidC_type1"/>
    <property type="match status" value="1"/>
</dbReference>
<dbReference type="InterPro" id="IPR019998">
    <property type="entry name" value="Membr_insert_YidC"/>
</dbReference>
<dbReference type="InterPro" id="IPR028053">
    <property type="entry name" value="Membr_insert_YidC_N"/>
</dbReference>
<dbReference type="InterPro" id="IPR001708">
    <property type="entry name" value="YidC/ALB3/OXA1/COX18"/>
</dbReference>
<dbReference type="InterPro" id="IPR028055">
    <property type="entry name" value="YidC/Oxa/ALB_C"/>
</dbReference>
<dbReference type="InterPro" id="IPR047196">
    <property type="entry name" value="YidC_ALB_C"/>
</dbReference>
<dbReference type="InterPro" id="IPR038221">
    <property type="entry name" value="YidC_periplasmic_sf"/>
</dbReference>
<dbReference type="NCBIfam" id="NF002351">
    <property type="entry name" value="PRK01318.1-1"/>
    <property type="match status" value="1"/>
</dbReference>
<dbReference type="NCBIfam" id="NF002352">
    <property type="entry name" value="PRK01318.1-3"/>
    <property type="match status" value="1"/>
</dbReference>
<dbReference type="NCBIfam" id="NF002353">
    <property type="entry name" value="PRK01318.1-4"/>
    <property type="match status" value="1"/>
</dbReference>
<dbReference type="NCBIfam" id="TIGR03593">
    <property type="entry name" value="yidC_nterm"/>
    <property type="match status" value="1"/>
</dbReference>
<dbReference type="NCBIfam" id="TIGR03592">
    <property type="entry name" value="yidC_oxa1_cterm"/>
    <property type="match status" value="1"/>
</dbReference>
<dbReference type="PANTHER" id="PTHR12428:SF65">
    <property type="entry name" value="CYTOCHROME C OXIDASE ASSEMBLY PROTEIN COX18, MITOCHONDRIAL"/>
    <property type="match status" value="1"/>
</dbReference>
<dbReference type="PANTHER" id="PTHR12428">
    <property type="entry name" value="OXA1"/>
    <property type="match status" value="1"/>
</dbReference>
<dbReference type="Pfam" id="PF02096">
    <property type="entry name" value="60KD_IMP"/>
    <property type="match status" value="1"/>
</dbReference>
<dbReference type="Pfam" id="PF14849">
    <property type="entry name" value="YidC_periplas"/>
    <property type="match status" value="1"/>
</dbReference>
<dbReference type="PRINTS" id="PR00701">
    <property type="entry name" value="60KDINNERMP"/>
</dbReference>
<dbReference type="PRINTS" id="PR01900">
    <property type="entry name" value="YIDCPROTEIN"/>
</dbReference>
<comment type="function">
    <text evidence="1">Required for the insertion and/or proper folding and/or complex formation of integral membrane proteins into the membrane. Involved in integration of membrane proteins that insert both dependently and independently of the Sec translocase complex, as well as at least some lipoproteins. Aids folding of multispanning membrane proteins.</text>
</comment>
<comment type="subunit">
    <text evidence="1">Interacts with the Sec translocase complex via SecD. Specifically interacts with transmembrane segments of nascent integral membrane proteins during membrane integration.</text>
</comment>
<comment type="subcellular location">
    <subcellularLocation>
        <location evidence="1">Cell inner membrane</location>
        <topology evidence="1">Multi-pass membrane protein</topology>
    </subcellularLocation>
</comment>
<comment type="similarity">
    <text evidence="1">Belongs to the OXA1/ALB3/YidC family. Type 1 subfamily.</text>
</comment>
<gene>
    <name evidence="1" type="primary">yidC</name>
    <name type="ordered locus">c4629</name>
</gene>
<keyword id="KW-0997">Cell inner membrane</keyword>
<keyword id="KW-1003">Cell membrane</keyword>
<keyword id="KW-0143">Chaperone</keyword>
<keyword id="KW-0472">Membrane</keyword>
<keyword id="KW-0653">Protein transport</keyword>
<keyword id="KW-1185">Reference proteome</keyword>
<keyword id="KW-0812">Transmembrane</keyword>
<keyword id="KW-1133">Transmembrane helix</keyword>
<keyword id="KW-0813">Transport</keyword>
<organism>
    <name type="scientific">Escherichia coli O6:H1 (strain CFT073 / ATCC 700928 / UPEC)</name>
    <dbReference type="NCBI Taxonomy" id="199310"/>
    <lineage>
        <taxon>Bacteria</taxon>
        <taxon>Pseudomonadati</taxon>
        <taxon>Pseudomonadota</taxon>
        <taxon>Gammaproteobacteria</taxon>
        <taxon>Enterobacterales</taxon>
        <taxon>Enterobacteriaceae</taxon>
        <taxon>Escherichia</taxon>
    </lineage>
</organism>
<accession>P65624</accession>
<accession>Q8FBV4</accession>
<accession>Q8XB42</accession>
<evidence type="ECO:0000255" key="1">
    <source>
        <dbReference type="HAMAP-Rule" id="MF_01810"/>
    </source>
</evidence>
<evidence type="ECO:0000256" key="2">
    <source>
        <dbReference type="SAM" id="MobiDB-lite"/>
    </source>
</evidence>